<accession>A8LKP0</accession>
<protein>
    <recommendedName>
        <fullName evidence="1">Putative pterin-4-alpha-carbinolamine dehydratase</fullName>
        <shortName evidence="1">PHS</shortName>
        <ecNumber evidence="1">4.2.1.96</ecNumber>
    </recommendedName>
    <alternativeName>
        <fullName evidence="1">4-alpha-hydroxy-tetrahydropterin dehydratase</fullName>
    </alternativeName>
    <alternativeName>
        <fullName evidence="1">Pterin carbinolamine dehydratase</fullName>
        <shortName evidence="1">PCD</shortName>
    </alternativeName>
</protein>
<dbReference type="EC" id="4.2.1.96" evidence="1"/>
<dbReference type="EMBL" id="CP000830">
    <property type="protein sequence ID" value="ABV91883.1"/>
    <property type="molecule type" value="Genomic_DNA"/>
</dbReference>
<dbReference type="RefSeq" id="WP_012176816.1">
    <property type="nucleotide sequence ID" value="NC_009952.1"/>
</dbReference>
<dbReference type="SMR" id="A8LKP0"/>
<dbReference type="STRING" id="398580.Dshi_0134"/>
<dbReference type="KEGG" id="dsh:Dshi_0134"/>
<dbReference type="eggNOG" id="COG2154">
    <property type="taxonomic scope" value="Bacteria"/>
</dbReference>
<dbReference type="HOGENOM" id="CLU_081974_3_2_5"/>
<dbReference type="OrthoDB" id="9794987at2"/>
<dbReference type="Proteomes" id="UP000006833">
    <property type="component" value="Chromosome"/>
</dbReference>
<dbReference type="GO" id="GO:0008124">
    <property type="term" value="F:4-alpha-hydroxytetrahydrobiopterin dehydratase activity"/>
    <property type="evidence" value="ECO:0007669"/>
    <property type="project" value="UniProtKB-UniRule"/>
</dbReference>
<dbReference type="GO" id="GO:0006729">
    <property type="term" value="P:tetrahydrobiopterin biosynthetic process"/>
    <property type="evidence" value="ECO:0007669"/>
    <property type="project" value="InterPro"/>
</dbReference>
<dbReference type="CDD" id="cd00914">
    <property type="entry name" value="PCD_DCoH_subfamily_b"/>
    <property type="match status" value="1"/>
</dbReference>
<dbReference type="Gene3D" id="3.30.1360.20">
    <property type="entry name" value="Transcriptional coactivator/pterin dehydratase"/>
    <property type="match status" value="1"/>
</dbReference>
<dbReference type="HAMAP" id="MF_00434">
    <property type="entry name" value="Pterin_4_alpha"/>
    <property type="match status" value="1"/>
</dbReference>
<dbReference type="InterPro" id="IPR036428">
    <property type="entry name" value="PCD_sf"/>
</dbReference>
<dbReference type="InterPro" id="IPR001533">
    <property type="entry name" value="Pterin_deHydtase"/>
</dbReference>
<dbReference type="NCBIfam" id="NF002018">
    <property type="entry name" value="PRK00823.1-3"/>
    <property type="match status" value="1"/>
</dbReference>
<dbReference type="PANTHER" id="PTHR12599">
    <property type="entry name" value="PTERIN-4-ALPHA-CARBINOLAMINE DEHYDRATASE"/>
    <property type="match status" value="1"/>
</dbReference>
<dbReference type="PANTHER" id="PTHR12599:SF0">
    <property type="entry name" value="PTERIN-4-ALPHA-CARBINOLAMINE DEHYDRATASE"/>
    <property type="match status" value="1"/>
</dbReference>
<dbReference type="Pfam" id="PF01329">
    <property type="entry name" value="Pterin_4a"/>
    <property type="match status" value="1"/>
</dbReference>
<dbReference type="SUPFAM" id="SSF55248">
    <property type="entry name" value="PCD-like"/>
    <property type="match status" value="1"/>
</dbReference>
<sequence length="97" mass="11002">MAQKLDDSTRDEHLAPLMRAGWEMVEGRDAIKKTFVFGDFTEAFAFMTGTALWAEKWDHHPEWSNVYKTVEVTLTTHDVGGLSELDIKLASKMDNLA</sequence>
<keyword id="KW-0456">Lyase</keyword>
<keyword id="KW-1185">Reference proteome</keyword>
<comment type="catalytic activity">
    <reaction evidence="1">
        <text>(4aS,6R)-4a-hydroxy-L-erythro-5,6,7,8-tetrahydrobiopterin = (6R)-L-erythro-6,7-dihydrobiopterin + H2O</text>
        <dbReference type="Rhea" id="RHEA:11920"/>
        <dbReference type="ChEBI" id="CHEBI:15377"/>
        <dbReference type="ChEBI" id="CHEBI:15642"/>
        <dbReference type="ChEBI" id="CHEBI:43120"/>
        <dbReference type="EC" id="4.2.1.96"/>
    </reaction>
</comment>
<comment type="similarity">
    <text evidence="1">Belongs to the pterin-4-alpha-carbinolamine dehydratase family.</text>
</comment>
<organism>
    <name type="scientific">Dinoroseobacter shibae (strain DSM 16493 / NCIMB 14021 / DFL 12)</name>
    <dbReference type="NCBI Taxonomy" id="398580"/>
    <lineage>
        <taxon>Bacteria</taxon>
        <taxon>Pseudomonadati</taxon>
        <taxon>Pseudomonadota</taxon>
        <taxon>Alphaproteobacteria</taxon>
        <taxon>Rhodobacterales</taxon>
        <taxon>Roseobacteraceae</taxon>
        <taxon>Dinoroseobacter</taxon>
    </lineage>
</organism>
<reference key="1">
    <citation type="journal article" date="2010" name="ISME J.">
        <title>The complete genome sequence of the algal symbiont Dinoroseobacter shibae: a hitchhiker's guide to life in the sea.</title>
        <authorList>
            <person name="Wagner-Dobler I."/>
            <person name="Ballhausen B."/>
            <person name="Berger M."/>
            <person name="Brinkhoff T."/>
            <person name="Buchholz I."/>
            <person name="Bunk B."/>
            <person name="Cypionka H."/>
            <person name="Daniel R."/>
            <person name="Drepper T."/>
            <person name="Gerdts G."/>
            <person name="Hahnke S."/>
            <person name="Han C."/>
            <person name="Jahn D."/>
            <person name="Kalhoefer D."/>
            <person name="Kiss H."/>
            <person name="Klenk H.P."/>
            <person name="Kyrpides N."/>
            <person name="Liebl W."/>
            <person name="Liesegang H."/>
            <person name="Meincke L."/>
            <person name="Pati A."/>
            <person name="Petersen J."/>
            <person name="Piekarski T."/>
            <person name="Pommerenke C."/>
            <person name="Pradella S."/>
            <person name="Pukall R."/>
            <person name="Rabus R."/>
            <person name="Stackebrandt E."/>
            <person name="Thole S."/>
            <person name="Thompson L."/>
            <person name="Tielen P."/>
            <person name="Tomasch J."/>
            <person name="von Jan M."/>
            <person name="Wanphrut N."/>
            <person name="Wichels A."/>
            <person name="Zech H."/>
            <person name="Simon M."/>
        </authorList>
    </citation>
    <scope>NUCLEOTIDE SEQUENCE [LARGE SCALE GENOMIC DNA]</scope>
    <source>
        <strain>DSM 16493 / NCIMB 14021 / DFL 12</strain>
    </source>
</reference>
<name>PHS_DINSH</name>
<proteinExistence type="inferred from homology"/>
<gene>
    <name type="ordered locus">Dshi_0134</name>
</gene>
<feature type="chain" id="PRO_1000080608" description="Putative pterin-4-alpha-carbinolamine dehydratase">
    <location>
        <begin position="1"/>
        <end position="97"/>
    </location>
</feature>
<evidence type="ECO:0000255" key="1">
    <source>
        <dbReference type="HAMAP-Rule" id="MF_00434"/>
    </source>
</evidence>